<evidence type="ECO:0000255" key="1">
    <source>
        <dbReference type="HAMAP-Rule" id="MF_01333"/>
    </source>
</evidence>
<evidence type="ECO:0000305" key="2"/>
<gene>
    <name evidence="1" type="primary">rplE</name>
    <name type="ordered locus">HSM_1965</name>
</gene>
<keyword id="KW-0687">Ribonucleoprotein</keyword>
<keyword id="KW-0689">Ribosomal protein</keyword>
<keyword id="KW-0694">RNA-binding</keyword>
<keyword id="KW-0699">rRNA-binding</keyword>
<keyword id="KW-0820">tRNA-binding</keyword>
<feature type="chain" id="PRO_1000086594" description="Large ribosomal subunit protein uL5">
    <location>
        <begin position="1"/>
        <end position="179"/>
    </location>
</feature>
<organism>
    <name type="scientific">Histophilus somni (strain 2336)</name>
    <name type="common">Haemophilus somnus</name>
    <dbReference type="NCBI Taxonomy" id="228400"/>
    <lineage>
        <taxon>Bacteria</taxon>
        <taxon>Pseudomonadati</taxon>
        <taxon>Pseudomonadota</taxon>
        <taxon>Gammaproteobacteria</taxon>
        <taxon>Pasteurellales</taxon>
        <taxon>Pasteurellaceae</taxon>
        <taxon>Histophilus</taxon>
    </lineage>
</organism>
<sequence length="179" mass="20314">MAKLHDYYRDTVVNELKAKFNYSSVMQVPRIEKITLNMGVGEALTDKKLLDNAVADLAAISGQKPLVTKARKSVAGFKIRQGYPIGCKVTLRGERMWEFFERLITIAVPRIRDFRGLNTKSFDGRGNYSMGVREQIIFPEIDYDKVDRVRGLDITITTTAKSDEEGQALLAAFNFPFRK</sequence>
<proteinExistence type="inferred from homology"/>
<accession>B0UX26</accession>
<name>RL5_HISS2</name>
<reference key="1">
    <citation type="submission" date="2008-02" db="EMBL/GenBank/DDBJ databases">
        <title>Complete sequence of Haemophilus somnus 2336.</title>
        <authorList>
            <consortium name="US DOE Joint Genome Institute"/>
            <person name="Siddaramappa S."/>
            <person name="Duncan A.J."/>
            <person name="Challacombe J.F."/>
            <person name="Rainey D."/>
            <person name="Gillaspy A.F."/>
            <person name="Carson M."/>
            <person name="Gipson J."/>
            <person name="Gipson M."/>
            <person name="Bruce D."/>
            <person name="Detter J.C."/>
            <person name="Han C.S."/>
            <person name="Land M."/>
            <person name="Tapia R."/>
            <person name="Thompson L.S."/>
            <person name="Orvis J."/>
            <person name="Zaitshik J."/>
            <person name="Barnes G."/>
            <person name="Brettin T.S."/>
            <person name="Dyer D.W."/>
            <person name="Inzana T.J."/>
        </authorList>
    </citation>
    <scope>NUCLEOTIDE SEQUENCE [LARGE SCALE GENOMIC DNA]</scope>
    <source>
        <strain>2336</strain>
    </source>
</reference>
<comment type="function">
    <text evidence="1">This is one of the proteins that bind and probably mediate the attachment of the 5S RNA into the large ribosomal subunit, where it forms part of the central protuberance. In the 70S ribosome it contacts protein S13 of the 30S subunit (bridge B1b), connecting the 2 subunits; this bridge is implicated in subunit movement. Contacts the P site tRNA; the 5S rRNA and some of its associated proteins might help stabilize positioning of ribosome-bound tRNAs.</text>
</comment>
<comment type="subunit">
    <text evidence="1">Part of the 50S ribosomal subunit; part of the 5S rRNA/L5/L18/L25 subcomplex. Contacts the 5S rRNA and the P site tRNA. Forms a bridge to the 30S subunit in the 70S ribosome.</text>
</comment>
<comment type="similarity">
    <text evidence="1">Belongs to the universal ribosomal protein uL5 family.</text>
</comment>
<dbReference type="EMBL" id="CP000947">
    <property type="protein sequence ID" value="ACA31760.1"/>
    <property type="molecule type" value="Genomic_DNA"/>
</dbReference>
<dbReference type="RefSeq" id="WP_011608227.1">
    <property type="nucleotide sequence ID" value="NC_010519.1"/>
</dbReference>
<dbReference type="SMR" id="B0UX26"/>
<dbReference type="STRING" id="228400.HSM_1965"/>
<dbReference type="GeneID" id="31488276"/>
<dbReference type="KEGG" id="hsm:HSM_1965"/>
<dbReference type="HOGENOM" id="CLU_061015_2_1_6"/>
<dbReference type="GO" id="GO:1990904">
    <property type="term" value="C:ribonucleoprotein complex"/>
    <property type="evidence" value="ECO:0007669"/>
    <property type="project" value="UniProtKB-KW"/>
</dbReference>
<dbReference type="GO" id="GO:0005840">
    <property type="term" value="C:ribosome"/>
    <property type="evidence" value="ECO:0007669"/>
    <property type="project" value="UniProtKB-KW"/>
</dbReference>
<dbReference type="GO" id="GO:0019843">
    <property type="term" value="F:rRNA binding"/>
    <property type="evidence" value="ECO:0007669"/>
    <property type="project" value="UniProtKB-UniRule"/>
</dbReference>
<dbReference type="GO" id="GO:0003735">
    <property type="term" value="F:structural constituent of ribosome"/>
    <property type="evidence" value="ECO:0007669"/>
    <property type="project" value="InterPro"/>
</dbReference>
<dbReference type="GO" id="GO:0000049">
    <property type="term" value="F:tRNA binding"/>
    <property type="evidence" value="ECO:0007669"/>
    <property type="project" value="UniProtKB-UniRule"/>
</dbReference>
<dbReference type="GO" id="GO:0006412">
    <property type="term" value="P:translation"/>
    <property type="evidence" value="ECO:0007669"/>
    <property type="project" value="UniProtKB-UniRule"/>
</dbReference>
<dbReference type="FunFam" id="3.30.1440.10:FF:000001">
    <property type="entry name" value="50S ribosomal protein L5"/>
    <property type="match status" value="1"/>
</dbReference>
<dbReference type="Gene3D" id="3.30.1440.10">
    <property type="match status" value="1"/>
</dbReference>
<dbReference type="HAMAP" id="MF_01333_B">
    <property type="entry name" value="Ribosomal_uL5_B"/>
    <property type="match status" value="1"/>
</dbReference>
<dbReference type="InterPro" id="IPR002132">
    <property type="entry name" value="Ribosomal_uL5"/>
</dbReference>
<dbReference type="InterPro" id="IPR020930">
    <property type="entry name" value="Ribosomal_uL5_bac-type"/>
</dbReference>
<dbReference type="InterPro" id="IPR031309">
    <property type="entry name" value="Ribosomal_uL5_C"/>
</dbReference>
<dbReference type="InterPro" id="IPR020929">
    <property type="entry name" value="Ribosomal_uL5_CS"/>
</dbReference>
<dbReference type="InterPro" id="IPR022803">
    <property type="entry name" value="Ribosomal_uL5_dom_sf"/>
</dbReference>
<dbReference type="InterPro" id="IPR031310">
    <property type="entry name" value="Ribosomal_uL5_N"/>
</dbReference>
<dbReference type="NCBIfam" id="NF000585">
    <property type="entry name" value="PRK00010.1"/>
    <property type="match status" value="1"/>
</dbReference>
<dbReference type="PANTHER" id="PTHR11994">
    <property type="entry name" value="60S RIBOSOMAL PROTEIN L11-RELATED"/>
    <property type="match status" value="1"/>
</dbReference>
<dbReference type="Pfam" id="PF00281">
    <property type="entry name" value="Ribosomal_L5"/>
    <property type="match status" value="1"/>
</dbReference>
<dbReference type="Pfam" id="PF00673">
    <property type="entry name" value="Ribosomal_L5_C"/>
    <property type="match status" value="1"/>
</dbReference>
<dbReference type="PIRSF" id="PIRSF002161">
    <property type="entry name" value="Ribosomal_L5"/>
    <property type="match status" value="1"/>
</dbReference>
<dbReference type="SUPFAM" id="SSF55282">
    <property type="entry name" value="RL5-like"/>
    <property type="match status" value="1"/>
</dbReference>
<dbReference type="PROSITE" id="PS00358">
    <property type="entry name" value="RIBOSOMAL_L5"/>
    <property type="match status" value="1"/>
</dbReference>
<protein>
    <recommendedName>
        <fullName evidence="1">Large ribosomal subunit protein uL5</fullName>
    </recommendedName>
    <alternativeName>
        <fullName evidence="2">50S ribosomal protein L5</fullName>
    </alternativeName>
</protein>